<proteinExistence type="inferred from homology"/>
<evidence type="ECO:0000250" key="1"/>
<evidence type="ECO:0000255" key="2"/>
<evidence type="ECO:0000305" key="3"/>
<protein>
    <recommendedName>
        <fullName>Probable cytochrome c oxidase polypeptide 4</fullName>
        <ecNumber>7.1.1.9</ecNumber>
    </recommendedName>
    <alternativeName>
        <fullName>Cytochrome aa3 subunit 4</fullName>
    </alternativeName>
    <alternativeName>
        <fullName>Cytochrome c oxidase polypeptide IV</fullName>
    </alternativeName>
</protein>
<accession>P64948</accession>
<accession>A0A1R3Y0J8</accession>
<accession>Q10406</accession>
<accession>X2BKD3</accession>
<comment type="function">
    <text evidence="1">Part of cytochrome c oxidase, its function is unknown.</text>
</comment>
<comment type="catalytic activity">
    <reaction>
        <text>4 Fe(II)-[cytochrome c] + O2 + 8 H(+)(in) = 4 Fe(III)-[cytochrome c] + 2 H2O + 4 H(+)(out)</text>
        <dbReference type="Rhea" id="RHEA:11436"/>
        <dbReference type="Rhea" id="RHEA-COMP:10350"/>
        <dbReference type="Rhea" id="RHEA-COMP:14399"/>
        <dbReference type="ChEBI" id="CHEBI:15377"/>
        <dbReference type="ChEBI" id="CHEBI:15378"/>
        <dbReference type="ChEBI" id="CHEBI:15379"/>
        <dbReference type="ChEBI" id="CHEBI:29033"/>
        <dbReference type="ChEBI" id="CHEBI:29034"/>
        <dbReference type="EC" id="7.1.1.9"/>
    </reaction>
</comment>
<comment type="subunit">
    <text evidence="1">Associates with subunits I, II and III to form cytochrome c oxidase.</text>
</comment>
<comment type="subcellular location">
    <subcellularLocation>
        <location evidence="1">Cell membrane</location>
        <topology evidence="1">Multi-pass membrane protein</topology>
    </subcellularLocation>
</comment>
<comment type="similarity">
    <text evidence="3">Belongs to the cytochrome c oxidase bacterial subunit CtaF family.</text>
</comment>
<dbReference type="EC" id="7.1.1.9"/>
<dbReference type="EMBL" id="LT708304">
    <property type="protein sequence ID" value="SIU00830.1"/>
    <property type="molecule type" value="Genomic_DNA"/>
</dbReference>
<dbReference type="RefSeq" id="NP_855871.1">
    <property type="nucleotide sequence ID" value="NC_002945.3"/>
</dbReference>
<dbReference type="RefSeq" id="WP_003411408.1">
    <property type="nucleotide sequence ID" value="NC_002945.4"/>
</dbReference>
<dbReference type="SMR" id="P64948"/>
<dbReference type="KEGG" id="mbo:BQ2027_MB2222C"/>
<dbReference type="PATRIC" id="fig|233413.5.peg.2438"/>
<dbReference type="Proteomes" id="UP000001419">
    <property type="component" value="Chromosome"/>
</dbReference>
<dbReference type="GO" id="GO:0005886">
    <property type="term" value="C:plasma membrane"/>
    <property type="evidence" value="ECO:0007669"/>
    <property type="project" value="UniProtKB-SubCell"/>
</dbReference>
<dbReference type="GO" id="GO:0004129">
    <property type="term" value="F:cytochrome-c oxidase activity"/>
    <property type="evidence" value="ECO:0007669"/>
    <property type="project" value="UniProtKB-EC"/>
</dbReference>
<dbReference type="GO" id="GO:0022900">
    <property type="term" value="P:electron transport chain"/>
    <property type="evidence" value="ECO:0007669"/>
    <property type="project" value="InterPro"/>
</dbReference>
<dbReference type="InterPro" id="IPR021050">
    <property type="entry name" value="Cyt_c_oxidase_su4_actinobac"/>
</dbReference>
<dbReference type="Pfam" id="PF12270">
    <property type="entry name" value="Cyt_c_ox_IV"/>
    <property type="match status" value="1"/>
</dbReference>
<dbReference type="PIRSF" id="PIRSF017385">
    <property type="entry name" value="CtaF"/>
    <property type="match status" value="1"/>
</dbReference>
<sequence length="139" mass="14865">MHIEARLFEFVAAFFVVTAVLYGVLTSMFATGGVEWAGTTALALTGGMALIVATFFRFVARRLDSRPEDYEGAEISDGAGELGFFSPHSWWPIMVALSGSVAAVGIALWLPWLIAAGVAFILASAAGLVFEYYVGPEKH</sequence>
<keyword id="KW-1003">Cell membrane</keyword>
<keyword id="KW-0472">Membrane</keyword>
<keyword id="KW-1185">Reference proteome</keyword>
<keyword id="KW-1278">Translocase</keyword>
<keyword id="KW-0812">Transmembrane</keyword>
<keyword id="KW-1133">Transmembrane helix</keyword>
<feature type="chain" id="PRO_0000220016" description="Probable cytochrome c oxidase polypeptide 4">
    <location>
        <begin position="1"/>
        <end position="139"/>
    </location>
</feature>
<feature type="transmembrane region" description="Helical" evidence="2">
    <location>
        <begin position="10"/>
        <end position="30"/>
    </location>
</feature>
<feature type="transmembrane region" description="Helical" evidence="2">
    <location>
        <begin position="36"/>
        <end position="56"/>
    </location>
</feature>
<feature type="transmembrane region" description="Helical" evidence="2">
    <location>
        <begin position="78"/>
        <end position="98"/>
    </location>
</feature>
<feature type="transmembrane region" description="Helical" evidence="2">
    <location>
        <begin position="101"/>
        <end position="121"/>
    </location>
</feature>
<organism>
    <name type="scientific">Mycobacterium bovis (strain ATCC BAA-935 / AF2122/97)</name>
    <dbReference type="NCBI Taxonomy" id="233413"/>
    <lineage>
        <taxon>Bacteria</taxon>
        <taxon>Bacillati</taxon>
        <taxon>Actinomycetota</taxon>
        <taxon>Actinomycetes</taxon>
        <taxon>Mycobacteriales</taxon>
        <taxon>Mycobacteriaceae</taxon>
        <taxon>Mycobacterium</taxon>
        <taxon>Mycobacterium tuberculosis complex</taxon>
    </lineage>
</organism>
<reference key="1">
    <citation type="journal article" date="2003" name="Proc. Natl. Acad. Sci. U.S.A.">
        <title>The complete genome sequence of Mycobacterium bovis.</title>
        <authorList>
            <person name="Garnier T."/>
            <person name="Eiglmeier K."/>
            <person name="Camus J.-C."/>
            <person name="Medina N."/>
            <person name="Mansoor H."/>
            <person name="Pryor M."/>
            <person name="Duthoy S."/>
            <person name="Grondin S."/>
            <person name="Lacroix C."/>
            <person name="Monsempe C."/>
            <person name="Simon S."/>
            <person name="Harris B."/>
            <person name="Atkin R."/>
            <person name="Doggett J."/>
            <person name="Mayes R."/>
            <person name="Keating L."/>
            <person name="Wheeler P.R."/>
            <person name="Parkhill J."/>
            <person name="Barrell B.G."/>
            <person name="Cole S.T."/>
            <person name="Gordon S.V."/>
            <person name="Hewinson R.G."/>
        </authorList>
    </citation>
    <scope>NUCLEOTIDE SEQUENCE [LARGE SCALE GENOMIC DNA]</scope>
    <source>
        <strain>ATCC BAA-935 / AF2122/97</strain>
    </source>
</reference>
<reference key="2">
    <citation type="journal article" date="2017" name="Genome Announc.">
        <title>Updated reference genome sequence and annotation of Mycobacterium bovis AF2122/97.</title>
        <authorList>
            <person name="Malone K.M."/>
            <person name="Farrell D."/>
            <person name="Stuber T.P."/>
            <person name="Schubert O.T."/>
            <person name="Aebersold R."/>
            <person name="Robbe-Austerman S."/>
            <person name="Gordon S.V."/>
        </authorList>
    </citation>
    <scope>NUCLEOTIDE SEQUENCE [LARGE SCALE GENOMIC DNA]</scope>
    <scope>GENOME REANNOTATION</scope>
    <source>
        <strain>ATCC BAA-935 / AF2122/97</strain>
    </source>
</reference>
<name>COX4_MYCBO</name>
<gene>
    <name type="primary">ctaF</name>
    <name type="ordered locus">BQ2027_MB2222C</name>
</gene>